<sequence length="570" mass="63481">MALRRLSLSRLSTESDSEDLPTFAFLKKEPSSTNRKPPQRAKNIVVVTSDSEASCPPSPGLKGPPCVPSAAGAPPQAGPVRVLSSSSEDEDVFVPLAERITCKLLTSKQLCPELSSSSLKTGLDGQNNASAPCDWKRQPWPKIPDVPLHGALEKSAANDEDSLLDDQCRQLPTYQATCRELAVSKTNSDRPLPKKRTKHIQTVQSGGSQGCWRPGQASRKENTPRQHERKKKAEMIKRLKAQRPEECLKHIVVVLDPVLLQMEGGGQLLGALQAMECSCVIEVQAIPRSITWRRRRTELVEDGDDWMEEPTILVLVLAEVFMSMAYNLKQASPSSTEKGKETLRSFVTDVTAKTGKALSLVIVDQEKCFRPQNPPRRRKSGMANKQAKAKHQQRQESSTGLMVSRADMEKALVDLQLYTEAQAWMVQSWKELADFTCAFTKAVAEAPFKKLRDQVTFSFFLEKDWAGGMKVDQSGRGLALIWRRQIQQLNRVSSEMASAIVDAYPSPQLLVQAYQRCFSEQERQNLLADIQVRRGEGVTATSRRVGPELSRRIYLQMTTAQPDLILDSVD</sequence>
<protein>
    <recommendedName>
        <fullName evidence="6">Structure-specific endonuclease subunit EME1</fullName>
    </recommendedName>
</protein>
<comment type="function">
    <text evidence="1 3">Non-catalytic subunit of the structure-specific, heterodimeric DNA endonuclease MUS81-EME1 which is involved in the maintenance of genome stability (PubMed:14609959). In the complex, EME1 is required for DNA cleavage, participating in DNA recognition and bending. MUS81-EME1 cleaves 3'-flaps and nicked Holliday junctions, and exhibit limited endonuclease activity with 5' flaps and nicked double-stranded DNAs. Active during prometaphase, MUS81-EME1 resolves mitotic recombination intermediates, including Holliday junctions, which form during homologous recombination (By similarity).</text>
</comment>
<comment type="subunit">
    <text evidence="3">Part of the heterodimeric MUS81-EME1 complex.</text>
</comment>
<comment type="subcellular location">
    <subcellularLocation>
        <location evidence="1">Nucleus</location>
        <location evidence="1">Nucleolus</location>
    </subcellularLocation>
    <text evidence="1">Recruited to regions of DNA damage in S-phase cells.</text>
</comment>
<comment type="tissue specificity">
    <text evidence="3 4">Weakly expressed in brain, heart, kidney, liver, lung, muscle, skin, small intestine, spleen, stomach, testis and thymus (PubMed:14609959, PubMed:27010503). Expressed in bone marrow (PubMed:27010503). Also expressed in embryonic stem cells (ES cells) (PubMed:14609959).</text>
</comment>
<comment type="similarity">
    <text evidence="5">Belongs to the EME1/MMS4 family.</text>
</comment>
<dbReference type="EMBL" id="AK078516">
    <property type="protein sequence ID" value="BAC37318.1"/>
    <property type="molecule type" value="mRNA"/>
</dbReference>
<dbReference type="EMBL" id="AL645764">
    <property type="status" value="NOT_ANNOTATED_CDS"/>
    <property type="molecule type" value="Genomic_DNA"/>
</dbReference>
<dbReference type="EMBL" id="BC089459">
    <property type="protein sequence ID" value="AAH89459.1"/>
    <property type="molecule type" value="mRNA"/>
</dbReference>
<dbReference type="CCDS" id="CCDS25262.1"/>
<dbReference type="RefSeq" id="NP_808420.1">
    <property type="nucleotide sequence ID" value="NM_177752.5"/>
</dbReference>
<dbReference type="SMR" id="Q8BJW7"/>
<dbReference type="BioGRID" id="234502">
    <property type="interactions" value="6"/>
</dbReference>
<dbReference type="ComplexPortal" id="CPX-585">
    <property type="entry name" value="MUS81-EME1 structure-specific endonuclease complex"/>
</dbReference>
<dbReference type="FunCoup" id="Q8BJW7">
    <property type="interactions" value="492"/>
</dbReference>
<dbReference type="STRING" id="10090.ENSMUSP00000036361"/>
<dbReference type="iPTMnet" id="Q8BJW7"/>
<dbReference type="PhosphoSitePlus" id="Q8BJW7"/>
<dbReference type="jPOST" id="Q8BJW7"/>
<dbReference type="PaxDb" id="10090-ENSMUSP00000036361"/>
<dbReference type="PeptideAtlas" id="Q8BJW7"/>
<dbReference type="ProteomicsDB" id="277585"/>
<dbReference type="Antibodypedia" id="4245">
    <property type="antibodies" value="232 antibodies from 31 providers"/>
</dbReference>
<dbReference type="DNASU" id="268465"/>
<dbReference type="Ensembl" id="ENSMUST00000039949.5">
    <property type="protein sequence ID" value="ENSMUSP00000036361.5"/>
    <property type="gene ID" value="ENSMUSG00000039055.5"/>
</dbReference>
<dbReference type="GeneID" id="268465"/>
<dbReference type="KEGG" id="mmu:268465"/>
<dbReference type="UCSC" id="uc007kzf.1">
    <property type="organism name" value="mouse"/>
</dbReference>
<dbReference type="AGR" id="MGI:3576783"/>
<dbReference type="CTD" id="146956"/>
<dbReference type="MGI" id="MGI:3576783">
    <property type="gene designation" value="Eme1"/>
</dbReference>
<dbReference type="VEuPathDB" id="HostDB:ENSMUSG00000039055"/>
<dbReference type="eggNOG" id="ENOG502R8ER">
    <property type="taxonomic scope" value="Eukaryota"/>
</dbReference>
<dbReference type="GeneTree" id="ENSGT00530000063937"/>
<dbReference type="HOGENOM" id="CLU_034099_2_0_1"/>
<dbReference type="InParanoid" id="Q8BJW7"/>
<dbReference type="OMA" id="FCVESDW"/>
<dbReference type="OrthoDB" id="343092at2759"/>
<dbReference type="PhylomeDB" id="Q8BJW7"/>
<dbReference type="TreeFam" id="TF325310"/>
<dbReference type="Reactome" id="R-MMU-5693568">
    <property type="pathway name" value="Resolution of D-loop Structures through Holliday Junction Intermediates"/>
</dbReference>
<dbReference type="Reactome" id="R-MMU-6783310">
    <property type="pathway name" value="Fanconi Anemia Pathway"/>
</dbReference>
<dbReference type="BioGRID-ORCS" id="268465">
    <property type="hits" value="21 hits in 115 CRISPR screens"/>
</dbReference>
<dbReference type="ChiTaRS" id="Eme1">
    <property type="organism name" value="mouse"/>
</dbReference>
<dbReference type="PRO" id="PR:Q8BJW7"/>
<dbReference type="Proteomes" id="UP000000589">
    <property type="component" value="Chromosome 11"/>
</dbReference>
<dbReference type="RNAct" id="Q8BJW7">
    <property type="molecule type" value="protein"/>
</dbReference>
<dbReference type="Bgee" id="ENSMUSG00000039055">
    <property type="expression patterns" value="Expressed in exoccipital bone and 150 other cell types or tissues"/>
</dbReference>
<dbReference type="GO" id="GO:0000785">
    <property type="term" value="C:chromatin"/>
    <property type="evidence" value="ECO:0000314"/>
    <property type="project" value="MGI"/>
</dbReference>
<dbReference type="GO" id="GO:1905347">
    <property type="term" value="C:endodeoxyribonuclease complex"/>
    <property type="evidence" value="ECO:0000266"/>
    <property type="project" value="ComplexPortal"/>
</dbReference>
<dbReference type="GO" id="GO:0000792">
    <property type="term" value="C:heterochromatin"/>
    <property type="evidence" value="ECO:0000314"/>
    <property type="project" value="MGI"/>
</dbReference>
<dbReference type="GO" id="GO:0048476">
    <property type="term" value="C:Holliday junction resolvase complex"/>
    <property type="evidence" value="ECO:0007669"/>
    <property type="project" value="InterPro"/>
</dbReference>
<dbReference type="GO" id="GO:0043596">
    <property type="term" value="C:nuclear replication fork"/>
    <property type="evidence" value="ECO:0000303"/>
    <property type="project" value="ComplexPortal"/>
</dbReference>
<dbReference type="GO" id="GO:0005730">
    <property type="term" value="C:nucleolus"/>
    <property type="evidence" value="ECO:0007669"/>
    <property type="project" value="UniProtKB-SubCell"/>
</dbReference>
<dbReference type="GO" id="GO:0003677">
    <property type="term" value="F:DNA binding"/>
    <property type="evidence" value="ECO:0007669"/>
    <property type="project" value="InterPro"/>
</dbReference>
<dbReference type="GO" id="GO:1990238">
    <property type="term" value="F:double-stranded DNA endonuclease activity"/>
    <property type="evidence" value="ECO:0007669"/>
    <property type="project" value="Ensembl"/>
</dbReference>
<dbReference type="GO" id="GO:0046872">
    <property type="term" value="F:metal ion binding"/>
    <property type="evidence" value="ECO:0007669"/>
    <property type="project" value="UniProtKB-KW"/>
</dbReference>
<dbReference type="GO" id="GO:0006310">
    <property type="term" value="P:DNA recombination"/>
    <property type="evidence" value="ECO:0007669"/>
    <property type="project" value="UniProtKB-KW"/>
</dbReference>
<dbReference type="GO" id="GO:0006302">
    <property type="term" value="P:double-strand break repair"/>
    <property type="evidence" value="ECO:0000266"/>
    <property type="project" value="ComplexPortal"/>
</dbReference>
<dbReference type="GO" id="GO:0031297">
    <property type="term" value="P:replication fork processing"/>
    <property type="evidence" value="ECO:0000266"/>
    <property type="project" value="ComplexPortal"/>
</dbReference>
<dbReference type="GO" id="GO:0072429">
    <property type="term" value="P:response to intra-S DNA damage checkpoint signaling"/>
    <property type="evidence" value="ECO:0000266"/>
    <property type="project" value="MGI"/>
</dbReference>
<dbReference type="CDD" id="cd20081">
    <property type="entry name" value="XPF_nuclease_EME1"/>
    <property type="match status" value="1"/>
</dbReference>
<dbReference type="FunFam" id="1.10.150.670:FF:000002">
    <property type="entry name" value="Crossover junction endonuclease EME1"/>
    <property type="match status" value="1"/>
</dbReference>
<dbReference type="FunFam" id="3.40.1620.30:FF:000001">
    <property type="entry name" value="Essential meiotic structure-specific endonuclease 1"/>
    <property type="match status" value="1"/>
</dbReference>
<dbReference type="FunFam" id="4.10.800.30:FF:000002">
    <property type="entry name" value="Essential meiotic structure-specific endonuclease 1"/>
    <property type="match status" value="1"/>
</dbReference>
<dbReference type="Gene3D" id="1.10.150.670">
    <property type="entry name" value="Crossover junction endonuclease EME1, DNA-binding domain"/>
    <property type="match status" value="1"/>
</dbReference>
<dbReference type="Gene3D" id="3.40.1620.30">
    <property type="entry name" value="ERCC4, Mus81-Eme1 complex, nuclease domain, subdomain 1"/>
    <property type="match status" value="1"/>
</dbReference>
<dbReference type="Gene3D" id="4.10.800.30">
    <property type="entry name" value="ERCC4, Mus81-Eme1 complex, nuclease domain, subdomain 2"/>
    <property type="match status" value="1"/>
</dbReference>
<dbReference type="InterPro" id="IPR042530">
    <property type="entry name" value="EME1/EME2_C"/>
</dbReference>
<dbReference type="InterPro" id="IPR043086">
    <property type="entry name" value="EME1_nucdom_sub1"/>
</dbReference>
<dbReference type="InterPro" id="IPR043087">
    <property type="entry name" value="Eme1_nucdom_sub2"/>
</dbReference>
<dbReference type="InterPro" id="IPR006166">
    <property type="entry name" value="ERCC4_domain"/>
</dbReference>
<dbReference type="InterPro" id="IPR033310">
    <property type="entry name" value="Mms4/EME1/EME2"/>
</dbReference>
<dbReference type="InterPro" id="IPR047522">
    <property type="entry name" value="XPF_nuclease_EME1_vertebrates"/>
</dbReference>
<dbReference type="PANTHER" id="PTHR21077:SF7">
    <property type="entry name" value="CROSSOVER JUNCTION ENDONUCLEASE EME1"/>
    <property type="match status" value="1"/>
</dbReference>
<dbReference type="PANTHER" id="PTHR21077">
    <property type="entry name" value="EME1 PROTEIN"/>
    <property type="match status" value="1"/>
</dbReference>
<dbReference type="Pfam" id="PF21292">
    <property type="entry name" value="EME1-MUS81_C"/>
    <property type="match status" value="1"/>
</dbReference>
<dbReference type="Pfam" id="PF02732">
    <property type="entry name" value="ERCC4"/>
    <property type="match status" value="1"/>
</dbReference>
<dbReference type="SMART" id="SM00891">
    <property type="entry name" value="ERCC4"/>
    <property type="match status" value="1"/>
</dbReference>
<organism>
    <name type="scientific">Mus musculus</name>
    <name type="common">Mouse</name>
    <dbReference type="NCBI Taxonomy" id="10090"/>
    <lineage>
        <taxon>Eukaryota</taxon>
        <taxon>Metazoa</taxon>
        <taxon>Chordata</taxon>
        <taxon>Craniata</taxon>
        <taxon>Vertebrata</taxon>
        <taxon>Euteleostomi</taxon>
        <taxon>Mammalia</taxon>
        <taxon>Eutheria</taxon>
        <taxon>Euarchontoglires</taxon>
        <taxon>Glires</taxon>
        <taxon>Rodentia</taxon>
        <taxon>Myomorpha</taxon>
        <taxon>Muroidea</taxon>
        <taxon>Muridae</taxon>
        <taxon>Murinae</taxon>
        <taxon>Mus</taxon>
        <taxon>Mus</taxon>
    </lineage>
</organism>
<name>EME1_MOUSE</name>
<accession>Q8BJW7</accession>
<keyword id="KW-0227">DNA damage</keyword>
<keyword id="KW-0233">DNA recombination</keyword>
<keyword id="KW-0234">DNA repair</keyword>
<keyword id="KW-1017">Isopeptide bond</keyword>
<keyword id="KW-0460">Magnesium</keyword>
<keyword id="KW-0479">Metal-binding</keyword>
<keyword id="KW-0539">Nucleus</keyword>
<keyword id="KW-0597">Phosphoprotein</keyword>
<keyword id="KW-1185">Reference proteome</keyword>
<keyword id="KW-0832">Ubl conjugation</keyword>
<reference key="1">
    <citation type="journal article" date="2005" name="Science">
        <title>The transcriptional landscape of the mammalian genome.</title>
        <authorList>
            <person name="Carninci P."/>
            <person name="Kasukawa T."/>
            <person name="Katayama S."/>
            <person name="Gough J."/>
            <person name="Frith M.C."/>
            <person name="Maeda N."/>
            <person name="Oyama R."/>
            <person name="Ravasi T."/>
            <person name="Lenhard B."/>
            <person name="Wells C."/>
            <person name="Kodzius R."/>
            <person name="Shimokawa K."/>
            <person name="Bajic V.B."/>
            <person name="Brenner S.E."/>
            <person name="Batalov S."/>
            <person name="Forrest A.R."/>
            <person name="Zavolan M."/>
            <person name="Davis M.J."/>
            <person name="Wilming L.G."/>
            <person name="Aidinis V."/>
            <person name="Allen J.E."/>
            <person name="Ambesi-Impiombato A."/>
            <person name="Apweiler R."/>
            <person name="Aturaliya R.N."/>
            <person name="Bailey T.L."/>
            <person name="Bansal M."/>
            <person name="Baxter L."/>
            <person name="Beisel K.W."/>
            <person name="Bersano T."/>
            <person name="Bono H."/>
            <person name="Chalk A.M."/>
            <person name="Chiu K.P."/>
            <person name="Choudhary V."/>
            <person name="Christoffels A."/>
            <person name="Clutterbuck D.R."/>
            <person name="Crowe M.L."/>
            <person name="Dalla E."/>
            <person name="Dalrymple B.P."/>
            <person name="de Bono B."/>
            <person name="Della Gatta G."/>
            <person name="di Bernardo D."/>
            <person name="Down T."/>
            <person name="Engstrom P."/>
            <person name="Fagiolini M."/>
            <person name="Faulkner G."/>
            <person name="Fletcher C.F."/>
            <person name="Fukushima T."/>
            <person name="Furuno M."/>
            <person name="Futaki S."/>
            <person name="Gariboldi M."/>
            <person name="Georgii-Hemming P."/>
            <person name="Gingeras T.R."/>
            <person name="Gojobori T."/>
            <person name="Green R.E."/>
            <person name="Gustincich S."/>
            <person name="Harbers M."/>
            <person name="Hayashi Y."/>
            <person name="Hensch T.K."/>
            <person name="Hirokawa N."/>
            <person name="Hill D."/>
            <person name="Huminiecki L."/>
            <person name="Iacono M."/>
            <person name="Ikeo K."/>
            <person name="Iwama A."/>
            <person name="Ishikawa T."/>
            <person name="Jakt M."/>
            <person name="Kanapin A."/>
            <person name="Katoh M."/>
            <person name="Kawasawa Y."/>
            <person name="Kelso J."/>
            <person name="Kitamura H."/>
            <person name="Kitano H."/>
            <person name="Kollias G."/>
            <person name="Krishnan S.P."/>
            <person name="Kruger A."/>
            <person name="Kummerfeld S.K."/>
            <person name="Kurochkin I.V."/>
            <person name="Lareau L.F."/>
            <person name="Lazarevic D."/>
            <person name="Lipovich L."/>
            <person name="Liu J."/>
            <person name="Liuni S."/>
            <person name="McWilliam S."/>
            <person name="Madan Babu M."/>
            <person name="Madera M."/>
            <person name="Marchionni L."/>
            <person name="Matsuda H."/>
            <person name="Matsuzawa S."/>
            <person name="Miki H."/>
            <person name="Mignone F."/>
            <person name="Miyake S."/>
            <person name="Morris K."/>
            <person name="Mottagui-Tabar S."/>
            <person name="Mulder N."/>
            <person name="Nakano N."/>
            <person name="Nakauchi H."/>
            <person name="Ng P."/>
            <person name="Nilsson R."/>
            <person name="Nishiguchi S."/>
            <person name="Nishikawa S."/>
            <person name="Nori F."/>
            <person name="Ohara O."/>
            <person name="Okazaki Y."/>
            <person name="Orlando V."/>
            <person name="Pang K.C."/>
            <person name="Pavan W.J."/>
            <person name="Pavesi G."/>
            <person name="Pesole G."/>
            <person name="Petrovsky N."/>
            <person name="Piazza S."/>
            <person name="Reed J."/>
            <person name="Reid J.F."/>
            <person name="Ring B.Z."/>
            <person name="Ringwald M."/>
            <person name="Rost B."/>
            <person name="Ruan Y."/>
            <person name="Salzberg S.L."/>
            <person name="Sandelin A."/>
            <person name="Schneider C."/>
            <person name="Schoenbach C."/>
            <person name="Sekiguchi K."/>
            <person name="Semple C.A."/>
            <person name="Seno S."/>
            <person name="Sessa L."/>
            <person name="Sheng Y."/>
            <person name="Shibata Y."/>
            <person name="Shimada H."/>
            <person name="Shimada K."/>
            <person name="Silva D."/>
            <person name="Sinclair B."/>
            <person name="Sperling S."/>
            <person name="Stupka E."/>
            <person name="Sugiura K."/>
            <person name="Sultana R."/>
            <person name="Takenaka Y."/>
            <person name="Taki K."/>
            <person name="Tammoja K."/>
            <person name="Tan S.L."/>
            <person name="Tang S."/>
            <person name="Taylor M.S."/>
            <person name="Tegner J."/>
            <person name="Teichmann S.A."/>
            <person name="Ueda H.R."/>
            <person name="van Nimwegen E."/>
            <person name="Verardo R."/>
            <person name="Wei C.L."/>
            <person name="Yagi K."/>
            <person name="Yamanishi H."/>
            <person name="Zabarovsky E."/>
            <person name="Zhu S."/>
            <person name="Zimmer A."/>
            <person name="Hide W."/>
            <person name="Bult C."/>
            <person name="Grimmond S.M."/>
            <person name="Teasdale R.D."/>
            <person name="Liu E.T."/>
            <person name="Brusic V."/>
            <person name="Quackenbush J."/>
            <person name="Wahlestedt C."/>
            <person name="Mattick J.S."/>
            <person name="Hume D.A."/>
            <person name="Kai C."/>
            <person name="Sasaki D."/>
            <person name="Tomaru Y."/>
            <person name="Fukuda S."/>
            <person name="Kanamori-Katayama M."/>
            <person name="Suzuki M."/>
            <person name="Aoki J."/>
            <person name="Arakawa T."/>
            <person name="Iida J."/>
            <person name="Imamura K."/>
            <person name="Itoh M."/>
            <person name="Kato T."/>
            <person name="Kawaji H."/>
            <person name="Kawagashira N."/>
            <person name="Kawashima T."/>
            <person name="Kojima M."/>
            <person name="Kondo S."/>
            <person name="Konno H."/>
            <person name="Nakano K."/>
            <person name="Ninomiya N."/>
            <person name="Nishio T."/>
            <person name="Okada M."/>
            <person name="Plessy C."/>
            <person name="Shibata K."/>
            <person name="Shiraki T."/>
            <person name="Suzuki S."/>
            <person name="Tagami M."/>
            <person name="Waki K."/>
            <person name="Watahiki A."/>
            <person name="Okamura-Oho Y."/>
            <person name="Suzuki H."/>
            <person name="Kawai J."/>
            <person name="Hayashizaki Y."/>
        </authorList>
    </citation>
    <scope>NUCLEOTIDE SEQUENCE [LARGE SCALE MRNA]</scope>
    <source>
        <tissue>Embryo</tissue>
    </source>
</reference>
<reference key="2">
    <citation type="journal article" date="2009" name="PLoS Biol.">
        <title>Lineage-specific biology revealed by a finished genome assembly of the mouse.</title>
        <authorList>
            <person name="Church D.M."/>
            <person name="Goodstadt L."/>
            <person name="Hillier L.W."/>
            <person name="Zody M.C."/>
            <person name="Goldstein S."/>
            <person name="She X."/>
            <person name="Bult C.J."/>
            <person name="Agarwala R."/>
            <person name="Cherry J.L."/>
            <person name="DiCuccio M."/>
            <person name="Hlavina W."/>
            <person name="Kapustin Y."/>
            <person name="Meric P."/>
            <person name="Maglott D."/>
            <person name="Birtle Z."/>
            <person name="Marques A.C."/>
            <person name="Graves T."/>
            <person name="Zhou S."/>
            <person name="Teague B."/>
            <person name="Potamousis K."/>
            <person name="Churas C."/>
            <person name="Place M."/>
            <person name="Herschleb J."/>
            <person name="Runnheim R."/>
            <person name="Forrest D."/>
            <person name="Amos-Landgraf J."/>
            <person name="Schwartz D.C."/>
            <person name="Cheng Z."/>
            <person name="Lindblad-Toh K."/>
            <person name="Eichler E.E."/>
            <person name="Ponting C.P."/>
        </authorList>
    </citation>
    <scope>NUCLEOTIDE SEQUENCE [LARGE SCALE GENOMIC DNA]</scope>
    <source>
        <strain>C57BL/6J</strain>
    </source>
</reference>
<reference key="3">
    <citation type="journal article" date="2004" name="Genome Res.">
        <title>The status, quality, and expansion of the NIH full-length cDNA project: the Mammalian Gene Collection (MGC).</title>
        <authorList>
            <consortium name="The MGC Project Team"/>
        </authorList>
    </citation>
    <scope>NUCLEOTIDE SEQUENCE [LARGE SCALE MRNA]</scope>
    <source>
        <strain>C57BL/6J</strain>
        <tissue>Brain</tissue>
    </source>
</reference>
<reference key="4">
    <citation type="journal article" date="2003" name="EMBO J.">
        <title>Eme1 is involved in DNA damage processing and maintenance of genomic stability in mammalian cells.</title>
        <authorList>
            <person name="Abraham J."/>
            <person name="Lemmers B."/>
            <person name="Hande M.P."/>
            <person name="Moynahan M.E."/>
            <person name="Chahwan C."/>
            <person name="Ciccia A."/>
            <person name="Essers J."/>
            <person name="Hanada K."/>
            <person name="Chahwan R."/>
            <person name="Khaw A.K."/>
            <person name="McPherson P."/>
            <person name="Shehabeldin A."/>
            <person name="Laister R."/>
            <person name="Arrowsmith C."/>
            <person name="Kanaar R."/>
            <person name="West S.C."/>
            <person name="Jasin M."/>
            <person name="Hakem R."/>
        </authorList>
    </citation>
    <scope>FUNCTION</scope>
    <scope>INTERACTION WITH MUS81</scope>
    <scope>TISSUE SPECIFICITY</scope>
</reference>
<reference key="5">
    <citation type="journal article" date="2010" name="Cell">
        <title>A tissue-specific atlas of mouse protein phosphorylation and expression.</title>
        <authorList>
            <person name="Huttlin E.L."/>
            <person name="Jedrychowski M.P."/>
            <person name="Elias J.E."/>
            <person name="Goswami T."/>
            <person name="Rad R."/>
            <person name="Beausoleil S.A."/>
            <person name="Villen J."/>
            <person name="Haas W."/>
            <person name="Sowa M.E."/>
            <person name="Gygi S.P."/>
        </authorList>
    </citation>
    <scope>IDENTIFICATION BY MASS SPECTROMETRY [LARGE SCALE ANALYSIS]</scope>
    <source>
        <tissue>Lung</tissue>
        <tissue>Spleen</tissue>
    </source>
</reference>
<reference key="6">
    <citation type="journal article" date="2016" name="PLoS ONE">
        <title>The GIY-YIG type endonuclease ankyrin repeat and LEM domain-containing protein 1 (ANKLE1) is dispensable for mouse hematopoiesis.</title>
        <authorList>
            <person name="Braun J."/>
            <person name="Meixner A."/>
            <person name="Brachner A."/>
            <person name="Foisner R."/>
        </authorList>
    </citation>
    <scope>TISSUE SPECIFICITY</scope>
</reference>
<proteinExistence type="evidence at protein level"/>
<evidence type="ECO:0000250" key="1">
    <source>
        <dbReference type="UniProtKB" id="Q96AY2"/>
    </source>
</evidence>
<evidence type="ECO:0000256" key="2">
    <source>
        <dbReference type="SAM" id="MobiDB-lite"/>
    </source>
</evidence>
<evidence type="ECO:0000269" key="3">
    <source>
    </source>
</evidence>
<evidence type="ECO:0000269" key="4">
    <source>
    </source>
</evidence>
<evidence type="ECO:0000305" key="5"/>
<evidence type="ECO:0000305" key="6">
    <source>
    </source>
</evidence>
<evidence type="ECO:0000312" key="7">
    <source>
        <dbReference type="MGI" id="MGI:3576783"/>
    </source>
</evidence>
<gene>
    <name evidence="7" type="primary">Eme1</name>
</gene>
<feature type="chain" id="PRO_0000223631" description="Structure-specific endonuclease subunit EME1">
    <location>
        <begin position="1"/>
        <end position="570"/>
    </location>
</feature>
<feature type="region of interest" description="Disordered" evidence="2">
    <location>
        <begin position="1"/>
        <end position="86"/>
    </location>
</feature>
<feature type="region of interest" description="Disordered" evidence="2">
    <location>
        <begin position="118"/>
        <end position="147"/>
    </location>
</feature>
<feature type="region of interest" description="Disordered" evidence="2">
    <location>
        <begin position="185"/>
        <end position="231"/>
    </location>
</feature>
<feature type="region of interest" description="Nuclease-like domain; forms the post-nick DNA binding interface and is involved in DNA recognition and bending" evidence="1">
    <location>
        <begin position="249"/>
        <end position="456"/>
    </location>
</feature>
<feature type="region of interest" description="Disordered" evidence="2">
    <location>
        <begin position="370"/>
        <end position="400"/>
    </location>
</feature>
<feature type="region of interest" description="Helix-hairpin-helix (2HhH); forms the pre-nick DNA binding interface and is involved in DNA recognition and bending" evidence="1">
    <location>
        <begin position="476"/>
        <end position="570"/>
    </location>
</feature>
<feature type="compositionally biased region" description="Low complexity" evidence="2">
    <location>
        <begin position="1"/>
        <end position="14"/>
    </location>
</feature>
<feature type="compositionally biased region" description="Low complexity" evidence="2">
    <location>
        <begin position="68"/>
        <end position="79"/>
    </location>
</feature>
<feature type="compositionally biased region" description="Polar residues" evidence="2">
    <location>
        <begin position="118"/>
        <end position="130"/>
    </location>
</feature>
<feature type="compositionally biased region" description="Basic and acidic residues" evidence="2">
    <location>
        <begin position="218"/>
        <end position="231"/>
    </location>
</feature>
<feature type="modified residue" description="Phosphoserine" evidence="1">
    <location>
        <position position="12"/>
    </location>
</feature>
<feature type="modified residue" description="Phosphoserine" evidence="1">
    <location>
        <position position="15"/>
    </location>
</feature>
<feature type="modified residue" description="Phosphoserine" evidence="1">
    <location>
        <position position="84"/>
    </location>
</feature>
<feature type="modified residue" description="Phosphoserine" evidence="1">
    <location>
        <position position="85"/>
    </location>
</feature>
<feature type="modified residue" description="Phosphoserine" evidence="1">
    <location>
        <position position="87"/>
    </location>
</feature>
<feature type="modified residue" description="Phosphoserine" evidence="1">
    <location>
        <position position="117"/>
    </location>
</feature>
<feature type="cross-link" description="Glycyl lysine isopeptide (Lys-Gly) (interchain with G-Cter in SUMO2)" evidence="1">
    <location>
        <position position="103"/>
    </location>
</feature>
<feature type="cross-link" description="Glycyl lysine isopeptide (Lys-Gly) (interchain with G-Cter in SUMO2)" evidence="1">
    <location>
        <position position="136"/>
    </location>
</feature>
<feature type="cross-link" description="Glycyl lysine isopeptide (Lys-Gly) (interchain with G-Cter in SUMO2)" evidence="1">
    <location>
        <position position="142"/>
    </location>
</feature>